<protein>
    <recommendedName>
        <fullName evidence="1">Coenzyme PQQ synthesis protein B</fullName>
    </recommendedName>
    <alternativeName>
        <fullName evidence="1">Pyrroloquinoline quinone biosynthesis protein B</fullName>
    </alternativeName>
</protein>
<keyword id="KW-0884">PQQ biosynthesis</keyword>
<keyword id="KW-0813">Transport</keyword>
<gene>
    <name evidence="1" type="primary">pqqB</name>
    <name type="ordered locus">RALTA_B0671</name>
</gene>
<dbReference type="EMBL" id="CU633750">
    <property type="protein sequence ID" value="CAQ71290.1"/>
    <property type="molecule type" value="Genomic_DNA"/>
</dbReference>
<dbReference type="RefSeq" id="WP_012355513.1">
    <property type="nucleotide sequence ID" value="NC_010530.1"/>
</dbReference>
<dbReference type="SMR" id="B3R8D4"/>
<dbReference type="GeneID" id="29765776"/>
<dbReference type="KEGG" id="cti:RALTA_B0671"/>
<dbReference type="eggNOG" id="COG1235">
    <property type="taxonomic scope" value="Bacteria"/>
</dbReference>
<dbReference type="HOGENOM" id="CLU_061120_0_0_4"/>
<dbReference type="BioCyc" id="CTAI977880:RALTA_RS18995-MONOMER"/>
<dbReference type="UniPathway" id="UPA00539"/>
<dbReference type="Proteomes" id="UP000001692">
    <property type="component" value="Chromosome 2"/>
</dbReference>
<dbReference type="GO" id="GO:0018189">
    <property type="term" value="P:pyrroloquinoline quinone biosynthetic process"/>
    <property type="evidence" value="ECO:0007669"/>
    <property type="project" value="UniProtKB-UniRule"/>
</dbReference>
<dbReference type="CDD" id="cd16274">
    <property type="entry name" value="PQQB-like_MBL-fold"/>
    <property type="match status" value="1"/>
</dbReference>
<dbReference type="Gene3D" id="3.60.15.10">
    <property type="entry name" value="Ribonuclease Z/Hydroxyacylglutathione hydrolase-like"/>
    <property type="match status" value="1"/>
</dbReference>
<dbReference type="HAMAP" id="MF_00653">
    <property type="entry name" value="PQQ_syn_PqqB"/>
    <property type="match status" value="1"/>
</dbReference>
<dbReference type="InterPro" id="IPR001279">
    <property type="entry name" value="Metallo-B-lactamas"/>
</dbReference>
<dbReference type="InterPro" id="IPR011842">
    <property type="entry name" value="PQQ_synth_PqqB"/>
</dbReference>
<dbReference type="InterPro" id="IPR036866">
    <property type="entry name" value="RibonucZ/Hydroxyglut_hydro"/>
</dbReference>
<dbReference type="NCBIfam" id="TIGR02108">
    <property type="entry name" value="PQQ_syn_pqqB"/>
    <property type="match status" value="1"/>
</dbReference>
<dbReference type="PANTHER" id="PTHR42663:SF7">
    <property type="entry name" value="COENZYME PQQ SYNTHESIS PROTEIN B"/>
    <property type="match status" value="1"/>
</dbReference>
<dbReference type="PANTHER" id="PTHR42663">
    <property type="entry name" value="HYDROLASE C777.06C-RELATED-RELATED"/>
    <property type="match status" value="1"/>
</dbReference>
<dbReference type="Pfam" id="PF12706">
    <property type="entry name" value="Lactamase_B_2"/>
    <property type="match status" value="1"/>
</dbReference>
<dbReference type="SUPFAM" id="SSF56281">
    <property type="entry name" value="Metallo-hydrolase/oxidoreductase"/>
    <property type="match status" value="1"/>
</dbReference>
<proteinExistence type="inferred from homology"/>
<name>PQQB_CUPTR</name>
<sequence length="305" mass="32825">MTTIRVLGSAAGGGFPQWNCNCRNCDGVRRGTVRATPRTQSSIAVCGDGPEAILVNASPDILQQLRQTPALQPARAARDTAIAAVLLMDAQIDHVTGLLMLREHRRALPLYATASVLEDLAGAFPLTRILSHYCGLQCHALPCDGMAFSVPPLDGVALTAVPLQSKAPPYSPRRHAPQPGDNIGLRIEDRHSGRSAFYAPGLGQVDDHVFAQLRRADVVLVDGTFWRDDEMQALGFSTRSAADMGHLALSGPGGMIEVLDRLPARRKILIHINNTNPVLAEDSPERAELARHGIELAYDGMEIAL</sequence>
<organism>
    <name type="scientific">Cupriavidus taiwanensis (strain DSM 17343 / BCRC 17206 / CCUG 44338 / CIP 107171 / LMG 19424 / R1)</name>
    <name type="common">Ralstonia taiwanensis (strain LMG 19424)</name>
    <dbReference type="NCBI Taxonomy" id="977880"/>
    <lineage>
        <taxon>Bacteria</taxon>
        <taxon>Pseudomonadati</taxon>
        <taxon>Pseudomonadota</taxon>
        <taxon>Betaproteobacteria</taxon>
        <taxon>Burkholderiales</taxon>
        <taxon>Burkholderiaceae</taxon>
        <taxon>Cupriavidus</taxon>
    </lineage>
</organism>
<evidence type="ECO:0000255" key="1">
    <source>
        <dbReference type="HAMAP-Rule" id="MF_00653"/>
    </source>
</evidence>
<accession>B3R8D4</accession>
<comment type="function">
    <text evidence="1">May be involved in the transport of PQQ or its precursor to the periplasm.</text>
</comment>
<comment type="pathway">
    <text evidence="1">Cofactor biosynthesis; pyrroloquinoline quinone biosynthesis.</text>
</comment>
<comment type="similarity">
    <text evidence="1">Belongs to the PqqB family.</text>
</comment>
<feature type="chain" id="PRO_1000131160" description="Coenzyme PQQ synthesis protein B">
    <location>
        <begin position="1"/>
        <end position="305"/>
    </location>
</feature>
<reference key="1">
    <citation type="journal article" date="2008" name="Genome Res.">
        <title>Genome sequence of the beta-rhizobium Cupriavidus taiwanensis and comparative genomics of rhizobia.</title>
        <authorList>
            <person name="Amadou C."/>
            <person name="Pascal G."/>
            <person name="Mangenot S."/>
            <person name="Glew M."/>
            <person name="Bontemps C."/>
            <person name="Capela D."/>
            <person name="Carrere S."/>
            <person name="Cruveiller S."/>
            <person name="Dossat C."/>
            <person name="Lajus A."/>
            <person name="Marchetti M."/>
            <person name="Poinsot V."/>
            <person name="Rouy Z."/>
            <person name="Servin B."/>
            <person name="Saad M."/>
            <person name="Schenowitz C."/>
            <person name="Barbe V."/>
            <person name="Batut J."/>
            <person name="Medigue C."/>
            <person name="Masson-Boivin C."/>
        </authorList>
    </citation>
    <scope>NUCLEOTIDE SEQUENCE [LARGE SCALE GENOMIC DNA]</scope>
    <source>
        <strain>DSM 17343 / BCRC 17206 / CCUG 44338 / CIP 107171 / LMG 19424 / R1</strain>
    </source>
</reference>